<name>PUR5_BORPE</name>
<protein>
    <recommendedName>
        <fullName evidence="1">Phosphoribosylformylglycinamidine cyclo-ligase</fullName>
        <ecNumber evidence="1">6.3.3.1</ecNumber>
    </recommendedName>
    <alternativeName>
        <fullName evidence="1">AIR synthase</fullName>
    </alternativeName>
    <alternativeName>
        <fullName evidence="1">AIRS</fullName>
    </alternativeName>
    <alternativeName>
        <fullName evidence="1">Phosphoribosyl-aminoimidazole synthetase</fullName>
    </alternativeName>
</protein>
<sequence length="349" mass="36790">MTNQHSAPLTYRDAGVDIDAGDALVDRIKPLAARTMRPGVLAGIGGFGALFEVPKKFREPVLVSGTDGVGTKLRLAFDWNRHDTVGIDLVAMSVNDILVQGAEPLYFLDYFACGKLSVDTAAAVVGGIARGCELAGCALIGGETAEMPGMYPDGEYDLAGFAVGAVDKSAIIDGKSIQPGDVVLGLASSGAHSNGYSLVRKILERAGARPDQDFHGQPLVDVVMAPTRIYVKQVLAALDRHGPAIKGLAHITGGGLLDNVPRILQPGMAAQLQRDGWEMPKLFQWLQQQGSVADAEMHRVFNCGIGMVLVVAADQADAVAATLREQGEIVNRIGEIVPQQDGMAQTVVV</sequence>
<comment type="catalytic activity">
    <reaction evidence="1">
        <text>2-formamido-N(1)-(5-O-phospho-beta-D-ribosyl)acetamidine + ATP = 5-amino-1-(5-phospho-beta-D-ribosyl)imidazole + ADP + phosphate + H(+)</text>
        <dbReference type="Rhea" id="RHEA:23032"/>
        <dbReference type="ChEBI" id="CHEBI:15378"/>
        <dbReference type="ChEBI" id="CHEBI:30616"/>
        <dbReference type="ChEBI" id="CHEBI:43474"/>
        <dbReference type="ChEBI" id="CHEBI:137981"/>
        <dbReference type="ChEBI" id="CHEBI:147287"/>
        <dbReference type="ChEBI" id="CHEBI:456216"/>
        <dbReference type="EC" id="6.3.3.1"/>
    </reaction>
</comment>
<comment type="pathway">
    <text evidence="1">Purine metabolism; IMP biosynthesis via de novo pathway; 5-amino-1-(5-phospho-D-ribosyl)imidazole from N(2)-formyl-N(1)-(5-phospho-D-ribosyl)glycinamide: step 2/2.</text>
</comment>
<comment type="subcellular location">
    <subcellularLocation>
        <location evidence="1">Cytoplasm</location>
    </subcellularLocation>
</comment>
<comment type="similarity">
    <text evidence="1">Belongs to the AIR synthase family.</text>
</comment>
<organism>
    <name type="scientific">Bordetella pertussis (strain Tohama I / ATCC BAA-589 / NCTC 13251)</name>
    <dbReference type="NCBI Taxonomy" id="257313"/>
    <lineage>
        <taxon>Bacteria</taxon>
        <taxon>Pseudomonadati</taxon>
        <taxon>Pseudomonadota</taxon>
        <taxon>Betaproteobacteria</taxon>
        <taxon>Burkholderiales</taxon>
        <taxon>Alcaligenaceae</taxon>
        <taxon>Bordetella</taxon>
    </lineage>
</organism>
<dbReference type="EC" id="6.3.3.1" evidence="1"/>
<dbReference type="EMBL" id="BX640411">
    <property type="protein sequence ID" value="CAE40622.1"/>
    <property type="molecule type" value="Genomic_DNA"/>
</dbReference>
<dbReference type="RefSeq" id="NP_879127.1">
    <property type="nucleotide sequence ID" value="NC_002929.2"/>
</dbReference>
<dbReference type="RefSeq" id="WP_003814339.1">
    <property type="nucleotide sequence ID" value="NZ_CP039022.1"/>
</dbReference>
<dbReference type="SMR" id="Q7W0A7"/>
<dbReference type="STRING" id="257313.BP0242"/>
<dbReference type="PaxDb" id="257313-BP0242"/>
<dbReference type="GeneID" id="69603501"/>
<dbReference type="KEGG" id="bpe:BP0242"/>
<dbReference type="PATRIC" id="fig|257313.5.peg.263"/>
<dbReference type="eggNOG" id="COG0150">
    <property type="taxonomic scope" value="Bacteria"/>
</dbReference>
<dbReference type="HOGENOM" id="CLU_047116_0_0_4"/>
<dbReference type="UniPathway" id="UPA00074">
    <property type="reaction ID" value="UER00129"/>
</dbReference>
<dbReference type="Proteomes" id="UP000002676">
    <property type="component" value="Chromosome"/>
</dbReference>
<dbReference type="GO" id="GO:0005829">
    <property type="term" value="C:cytosol"/>
    <property type="evidence" value="ECO:0007669"/>
    <property type="project" value="TreeGrafter"/>
</dbReference>
<dbReference type="GO" id="GO:0005524">
    <property type="term" value="F:ATP binding"/>
    <property type="evidence" value="ECO:0007669"/>
    <property type="project" value="UniProtKB-KW"/>
</dbReference>
<dbReference type="GO" id="GO:0004637">
    <property type="term" value="F:phosphoribosylamine-glycine ligase activity"/>
    <property type="evidence" value="ECO:0007669"/>
    <property type="project" value="TreeGrafter"/>
</dbReference>
<dbReference type="GO" id="GO:0004641">
    <property type="term" value="F:phosphoribosylformylglycinamidine cyclo-ligase activity"/>
    <property type="evidence" value="ECO:0007669"/>
    <property type="project" value="UniProtKB-UniRule"/>
</dbReference>
<dbReference type="GO" id="GO:0006189">
    <property type="term" value="P:'de novo' IMP biosynthetic process"/>
    <property type="evidence" value="ECO:0007669"/>
    <property type="project" value="UniProtKB-UniRule"/>
</dbReference>
<dbReference type="GO" id="GO:0046084">
    <property type="term" value="P:adenine biosynthetic process"/>
    <property type="evidence" value="ECO:0007669"/>
    <property type="project" value="TreeGrafter"/>
</dbReference>
<dbReference type="CDD" id="cd02196">
    <property type="entry name" value="PurM"/>
    <property type="match status" value="1"/>
</dbReference>
<dbReference type="FunFam" id="3.30.1330.10:FF:000001">
    <property type="entry name" value="Phosphoribosylformylglycinamidine cyclo-ligase"/>
    <property type="match status" value="1"/>
</dbReference>
<dbReference type="FunFam" id="3.90.650.10:FF:000001">
    <property type="entry name" value="Phosphoribosylformylglycinamidine cyclo-ligase"/>
    <property type="match status" value="1"/>
</dbReference>
<dbReference type="Gene3D" id="3.90.650.10">
    <property type="entry name" value="PurM-like C-terminal domain"/>
    <property type="match status" value="1"/>
</dbReference>
<dbReference type="Gene3D" id="3.30.1330.10">
    <property type="entry name" value="PurM-like, N-terminal domain"/>
    <property type="match status" value="1"/>
</dbReference>
<dbReference type="HAMAP" id="MF_00741">
    <property type="entry name" value="AIRS"/>
    <property type="match status" value="1"/>
</dbReference>
<dbReference type="InterPro" id="IPR010918">
    <property type="entry name" value="PurM-like_C_dom"/>
</dbReference>
<dbReference type="InterPro" id="IPR036676">
    <property type="entry name" value="PurM-like_C_sf"/>
</dbReference>
<dbReference type="InterPro" id="IPR016188">
    <property type="entry name" value="PurM-like_N"/>
</dbReference>
<dbReference type="InterPro" id="IPR036921">
    <property type="entry name" value="PurM-like_N_sf"/>
</dbReference>
<dbReference type="InterPro" id="IPR004733">
    <property type="entry name" value="PurM_cligase"/>
</dbReference>
<dbReference type="NCBIfam" id="TIGR00878">
    <property type="entry name" value="purM"/>
    <property type="match status" value="1"/>
</dbReference>
<dbReference type="PANTHER" id="PTHR10520:SF12">
    <property type="entry name" value="TRIFUNCTIONAL PURINE BIOSYNTHETIC PROTEIN ADENOSINE-3"/>
    <property type="match status" value="1"/>
</dbReference>
<dbReference type="PANTHER" id="PTHR10520">
    <property type="entry name" value="TRIFUNCTIONAL PURINE BIOSYNTHETIC PROTEIN ADENOSINE-3-RELATED"/>
    <property type="match status" value="1"/>
</dbReference>
<dbReference type="Pfam" id="PF00586">
    <property type="entry name" value="AIRS"/>
    <property type="match status" value="1"/>
</dbReference>
<dbReference type="Pfam" id="PF02769">
    <property type="entry name" value="AIRS_C"/>
    <property type="match status" value="1"/>
</dbReference>
<dbReference type="SUPFAM" id="SSF56042">
    <property type="entry name" value="PurM C-terminal domain-like"/>
    <property type="match status" value="1"/>
</dbReference>
<dbReference type="SUPFAM" id="SSF55326">
    <property type="entry name" value="PurM N-terminal domain-like"/>
    <property type="match status" value="1"/>
</dbReference>
<gene>
    <name evidence="1" type="primary">purM</name>
    <name type="ordered locus">BP0242</name>
</gene>
<evidence type="ECO:0000255" key="1">
    <source>
        <dbReference type="HAMAP-Rule" id="MF_00741"/>
    </source>
</evidence>
<proteinExistence type="inferred from homology"/>
<feature type="chain" id="PRO_0000148201" description="Phosphoribosylformylglycinamidine cyclo-ligase">
    <location>
        <begin position="1"/>
        <end position="349"/>
    </location>
</feature>
<keyword id="KW-0067">ATP-binding</keyword>
<keyword id="KW-0963">Cytoplasm</keyword>
<keyword id="KW-0436">Ligase</keyword>
<keyword id="KW-0547">Nucleotide-binding</keyword>
<keyword id="KW-0658">Purine biosynthesis</keyword>
<keyword id="KW-1185">Reference proteome</keyword>
<accession>Q7W0A7</accession>
<reference key="1">
    <citation type="journal article" date="2003" name="Nat. Genet.">
        <title>Comparative analysis of the genome sequences of Bordetella pertussis, Bordetella parapertussis and Bordetella bronchiseptica.</title>
        <authorList>
            <person name="Parkhill J."/>
            <person name="Sebaihia M."/>
            <person name="Preston A."/>
            <person name="Murphy L.D."/>
            <person name="Thomson N.R."/>
            <person name="Harris D.E."/>
            <person name="Holden M.T.G."/>
            <person name="Churcher C.M."/>
            <person name="Bentley S.D."/>
            <person name="Mungall K.L."/>
            <person name="Cerdeno-Tarraga A.-M."/>
            <person name="Temple L."/>
            <person name="James K.D."/>
            <person name="Harris B."/>
            <person name="Quail M.A."/>
            <person name="Achtman M."/>
            <person name="Atkin R."/>
            <person name="Baker S."/>
            <person name="Basham D."/>
            <person name="Bason N."/>
            <person name="Cherevach I."/>
            <person name="Chillingworth T."/>
            <person name="Collins M."/>
            <person name="Cronin A."/>
            <person name="Davis P."/>
            <person name="Doggett J."/>
            <person name="Feltwell T."/>
            <person name="Goble A."/>
            <person name="Hamlin N."/>
            <person name="Hauser H."/>
            <person name="Holroyd S."/>
            <person name="Jagels K."/>
            <person name="Leather S."/>
            <person name="Moule S."/>
            <person name="Norberczak H."/>
            <person name="O'Neil S."/>
            <person name="Ormond D."/>
            <person name="Price C."/>
            <person name="Rabbinowitsch E."/>
            <person name="Rutter S."/>
            <person name="Sanders M."/>
            <person name="Saunders D."/>
            <person name="Seeger K."/>
            <person name="Sharp S."/>
            <person name="Simmonds M."/>
            <person name="Skelton J."/>
            <person name="Squares R."/>
            <person name="Squares S."/>
            <person name="Stevens K."/>
            <person name="Unwin L."/>
            <person name="Whitehead S."/>
            <person name="Barrell B.G."/>
            <person name="Maskell D.J."/>
        </authorList>
    </citation>
    <scope>NUCLEOTIDE SEQUENCE [LARGE SCALE GENOMIC DNA]</scope>
    <source>
        <strain>Tohama I / ATCC BAA-589 / NCTC 13251</strain>
    </source>
</reference>